<dbReference type="EC" id="6.1.1.9" evidence="1"/>
<dbReference type="EMBL" id="AE017143">
    <property type="protein sequence ID" value="AAP95593.1"/>
    <property type="molecule type" value="Genomic_DNA"/>
</dbReference>
<dbReference type="RefSeq" id="WP_010944645.1">
    <property type="nucleotide sequence ID" value="NC_002940.2"/>
</dbReference>
<dbReference type="SMR" id="Q7VN93"/>
<dbReference type="STRING" id="233412.HD_0669"/>
<dbReference type="KEGG" id="hdu:HD_0669"/>
<dbReference type="eggNOG" id="COG0525">
    <property type="taxonomic scope" value="Bacteria"/>
</dbReference>
<dbReference type="HOGENOM" id="CLU_001493_0_2_6"/>
<dbReference type="OrthoDB" id="9810365at2"/>
<dbReference type="Proteomes" id="UP000001022">
    <property type="component" value="Chromosome"/>
</dbReference>
<dbReference type="GO" id="GO:0005829">
    <property type="term" value="C:cytosol"/>
    <property type="evidence" value="ECO:0007669"/>
    <property type="project" value="TreeGrafter"/>
</dbReference>
<dbReference type="GO" id="GO:0002161">
    <property type="term" value="F:aminoacyl-tRNA deacylase activity"/>
    <property type="evidence" value="ECO:0007669"/>
    <property type="project" value="InterPro"/>
</dbReference>
<dbReference type="GO" id="GO:0005524">
    <property type="term" value="F:ATP binding"/>
    <property type="evidence" value="ECO:0007669"/>
    <property type="project" value="UniProtKB-UniRule"/>
</dbReference>
<dbReference type="GO" id="GO:0004832">
    <property type="term" value="F:valine-tRNA ligase activity"/>
    <property type="evidence" value="ECO:0007669"/>
    <property type="project" value="UniProtKB-UniRule"/>
</dbReference>
<dbReference type="GO" id="GO:0006438">
    <property type="term" value="P:valyl-tRNA aminoacylation"/>
    <property type="evidence" value="ECO:0007669"/>
    <property type="project" value="UniProtKB-UniRule"/>
</dbReference>
<dbReference type="CDD" id="cd07962">
    <property type="entry name" value="Anticodon_Ia_Val"/>
    <property type="match status" value="1"/>
</dbReference>
<dbReference type="CDD" id="cd00817">
    <property type="entry name" value="ValRS_core"/>
    <property type="match status" value="1"/>
</dbReference>
<dbReference type="FunFam" id="1.10.287.380:FF:000001">
    <property type="entry name" value="Valine--tRNA ligase"/>
    <property type="match status" value="1"/>
</dbReference>
<dbReference type="FunFam" id="1.10.730.10:FF:000007">
    <property type="entry name" value="Valine--tRNA ligase"/>
    <property type="match status" value="1"/>
</dbReference>
<dbReference type="FunFam" id="3.40.50.620:FF:000032">
    <property type="entry name" value="Valine--tRNA ligase"/>
    <property type="match status" value="1"/>
</dbReference>
<dbReference type="FunFam" id="3.40.50.620:FF:000146">
    <property type="entry name" value="Valine--tRNA ligase"/>
    <property type="match status" value="1"/>
</dbReference>
<dbReference type="FunFam" id="3.90.740.10:FF:000003">
    <property type="entry name" value="Valine--tRNA ligase"/>
    <property type="match status" value="1"/>
</dbReference>
<dbReference type="FunFam" id="3.90.740.10:FF:000004">
    <property type="entry name" value="Valine--tRNA ligase"/>
    <property type="match status" value="1"/>
</dbReference>
<dbReference type="Gene3D" id="3.40.50.620">
    <property type="entry name" value="HUPs"/>
    <property type="match status" value="2"/>
</dbReference>
<dbReference type="Gene3D" id="1.10.730.10">
    <property type="entry name" value="Isoleucyl-tRNA Synthetase, Domain 1"/>
    <property type="match status" value="1"/>
</dbReference>
<dbReference type="Gene3D" id="1.10.287.380">
    <property type="entry name" value="Valyl-tRNA synthetase, C-terminal domain"/>
    <property type="match status" value="1"/>
</dbReference>
<dbReference type="Gene3D" id="3.90.740.10">
    <property type="entry name" value="Valyl/Leucyl/Isoleucyl-tRNA synthetase, editing domain"/>
    <property type="match status" value="2"/>
</dbReference>
<dbReference type="HAMAP" id="MF_02004">
    <property type="entry name" value="Val_tRNA_synth_type1"/>
    <property type="match status" value="1"/>
</dbReference>
<dbReference type="InterPro" id="IPR001412">
    <property type="entry name" value="aa-tRNA-synth_I_CS"/>
</dbReference>
<dbReference type="InterPro" id="IPR002300">
    <property type="entry name" value="aa-tRNA-synth_Ia"/>
</dbReference>
<dbReference type="InterPro" id="IPR033705">
    <property type="entry name" value="Anticodon_Ia_Val"/>
</dbReference>
<dbReference type="InterPro" id="IPR013155">
    <property type="entry name" value="M/V/L/I-tRNA-synth_anticd-bd"/>
</dbReference>
<dbReference type="InterPro" id="IPR014729">
    <property type="entry name" value="Rossmann-like_a/b/a_fold"/>
</dbReference>
<dbReference type="InterPro" id="IPR010978">
    <property type="entry name" value="tRNA-bd_arm"/>
</dbReference>
<dbReference type="InterPro" id="IPR009080">
    <property type="entry name" value="tRNAsynth_Ia_anticodon-bd"/>
</dbReference>
<dbReference type="InterPro" id="IPR037118">
    <property type="entry name" value="Val-tRNA_synth_C_sf"/>
</dbReference>
<dbReference type="InterPro" id="IPR019499">
    <property type="entry name" value="Val-tRNA_synth_tRNA-bd"/>
</dbReference>
<dbReference type="InterPro" id="IPR009008">
    <property type="entry name" value="Val/Leu/Ile-tRNA-synth_edit"/>
</dbReference>
<dbReference type="InterPro" id="IPR002303">
    <property type="entry name" value="Valyl-tRNA_ligase"/>
</dbReference>
<dbReference type="NCBIfam" id="NF004349">
    <property type="entry name" value="PRK05729.1"/>
    <property type="match status" value="1"/>
</dbReference>
<dbReference type="NCBIfam" id="TIGR00422">
    <property type="entry name" value="valS"/>
    <property type="match status" value="1"/>
</dbReference>
<dbReference type="PANTHER" id="PTHR11946:SF93">
    <property type="entry name" value="VALINE--TRNA LIGASE, CHLOROPLASTIC_MITOCHONDRIAL 2"/>
    <property type="match status" value="1"/>
</dbReference>
<dbReference type="PANTHER" id="PTHR11946">
    <property type="entry name" value="VALYL-TRNA SYNTHETASES"/>
    <property type="match status" value="1"/>
</dbReference>
<dbReference type="Pfam" id="PF08264">
    <property type="entry name" value="Anticodon_1"/>
    <property type="match status" value="1"/>
</dbReference>
<dbReference type="Pfam" id="PF00133">
    <property type="entry name" value="tRNA-synt_1"/>
    <property type="match status" value="1"/>
</dbReference>
<dbReference type="Pfam" id="PF10458">
    <property type="entry name" value="Val_tRNA-synt_C"/>
    <property type="match status" value="1"/>
</dbReference>
<dbReference type="PRINTS" id="PR00986">
    <property type="entry name" value="TRNASYNTHVAL"/>
</dbReference>
<dbReference type="SUPFAM" id="SSF47323">
    <property type="entry name" value="Anticodon-binding domain of a subclass of class I aminoacyl-tRNA synthetases"/>
    <property type="match status" value="1"/>
</dbReference>
<dbReference type="SUPFAM" id="SSF52374">
    <property type="entry name" value="Nucleotidylyl transferase"/>
    <property type="match status" value="1"/>
</dbReference>
<dbReference type="SUPFAM" id="SSF46589">
    <property type="entry name" value="tRNA-binding arm"/>
    <property type="match status" value="1"/>
</dbReference>
<dbReference type="SUPFAM" id="SSF50677">
    <property type="entry name" value="ValRS/IleRS/LeuRS editing domain"/>
    <property type="match status" value="1"/>
</dbReference>
<dbReference type="PROSITE" id="PS00178">
    <property type="entry name" value="AA_TRNA_LIGASE_I"/>
    <property type="match status" value="1"/>
</dbReference>
<reference key="1">
    <citation type="submission" date="2003-06" db="EMBL/GenBank/DDBJ databases">
        <title>The complete genome sequence of Haemophilus ducreyi.</title>
        <authorList>
            <person name="Munson R.S. Jr."/>
            <person name="Ray W.C."/>
            <person name="Mahairas G."/>
            <person name="Sabo P."/>
            <person name="Mungur R."/>
            <person name="Johnson L."/>
            <person name="Nguyen D."/>
            <person name="Wang J."/>
            <person name="Forst C."/>
            <person name="Hood L."/>
        </authorList>
    </citation>
    <scope>NUCLEOTIDE SEQUENCE [LARGE SCALE GENOMIC DNA]</scope>
    <source>
        <strain>35000HP / ATCC 700724</strain>
    </source>
</reference>
<name>SYV_HAEDU</name>
<organism>
    <name type="scientific">Haemophilus ducreyi (strain 35000HP / ATCC 700724)</name>
    <dbReference type="NCBI Taxonomy" id="233412"/>
    <lineage>
        <taxon>Bacteria</taxon>
        <taxon>Pseudomonadati</taxon>
        <taxon>Pseudomonadota</taxon>
        <taxon>Gammaproteobacteria</taxon>
        <taxon>Pasteurellales</taxon>
        <taxon>Pasteurellaceae</taxon>
        <taxon>Haemophilus</taxon>
    </lineage>
</organism>
<comment type="function">
    <text evidence="1">Catalyzes the attachment of valine to tRNA(Val). As ValRS can inadvertently accommodate and process structurally similar amino acids such as threonine, to avoid such errors, it has a 'posttransfer' editing activity that hydrolyzes mischarged Thr-tRNA(Val) in a tRNA-dependent manner.</text>
</comment>
<comment type="catalytic activity">
    <reaction evidence="1">
        <text>tRNA(Val) + L-valine + ATP = L-valyl-tRNA(Val) + AMP + diphosphate</text>
        <dbReference type="Rhea" id="RHEA:10704"/>
        <dbReference type="Rhea" id="RHEA-COMP:9672"/>
        <dbReference type="Rhea" id="RHEA-COMP:9708"/>
        <dbReference type="ChEBI" id="CHEBI:30616"/>
        <dbReference type="ChEBI" id="CHEBI:33019"/>
        <dbReference type="ChEBI" id="CHEBI:57762"/>
        <dbReference type="ChEBI" id="CHEBI:78442"/>
        <dbReference type="ChEBI" id="CHEBI:78537"/>
        <dbReference type="ChEBI" id="CHEBI:456215"/>
        <dbReference type="EC" id="6.1.1.9"/>
    </reaction>
</comment>
<comment type="subunit">
    <text evidence="1">Monomer.</text>
</comment>
<comment type="subcellular location">
    <subcellularLocation>
        <location evidence="1">Cytoplasm</location>
    </subcellularLocation>
</comment>
<comment type="domain">
    <text evidence="1">ValRS has two distinct active sites: one for aminoacylation and one for editing. The misactivated threonine is translocated from the active site to the editing site.</text>
</comment>
<comment type="domain">
    <text evidence="1">The C-terminal coiled-coil domain is crucial for aminoacylation activity.</text>
</comment>
<comment type="similarity">
    <text evidence="1">Belongs to the class-I aminoacyl-tRNA synthetase family. ValS type 1 subfamily.</text>
</comment>
<proteinExistence type="inferred from homology"/>
<gene>
    <name evidence="1" type="primary">valS</name>
    <name type="ordered locus">HD_0669</name>
</gene>
<sequence length="961" mass="108975">MTQKFEMADRFDASAVEQALYQHWEEQGYFKPSENPAVPSYCIAIPPPNVTGSLHMGHAFQQTLMDTLIRFNRMEGNNTLWQAGTDHAGIATQMVVERKIAAEEGKTRHDYGREAFINKIWDWKAYSGGTISQQMRRLGNSIDWQRERFTMDDGLSNAVKEVFVRLHEQGLIYRGKRLVNWDPKLHTAISDLEVENKESKGSLWHFRYPLSNGVKTADGKDYLIVATTRPETVLGDTAVAVHPEDERYQSLIGKTVLLPLANREIPIIADEYVDREFGTGVVKITPAHDFNDYEVGKRHALPMVNVMTMNADIRQTAEVLGPDGKPLNTYQAIIPADYQGLERFTARKKVVADFEALALLDEIKPHDLKVPYGDRGGVPIEPMLTDQWYVSVKPLAEVATKAVENGEIQFVPKQYENLYFSWMRDIQDWCISRQLWWGHRIPAWYDESGNVYVARTEAEVRIKHNLPLDLPLTQDEDVLDTWFSSGLWTFSTLGWPEQTKELKMFHTTDVLITGFDIIFFWVARMIMFTMHFIKDENGKPQVPFKTVYVTGLIRDEQGQKMSKSKGNVLDPIDMIDGISLADLLEKRTGNMMQPQLAEKIAKATRKEFAATPTLPAGGIAAHGTDALRFTLAALASNGRDINWDMKRLEGYRNFCNKLWNASRFVLTNDKLDLSAGEVEYSLADRWIESSFNRTVGEFREALTQYRFDLAANAIYEFTWNQFCDWYLELTKPVFANGSDAQKRATSKTLVSLLEKLLRLAHPIMPFITEEIWQKVKHFAGVEGDSIMLQPFPIVEQAKLDADAEQQINWLKELIIAVRNIRAEANIAPSKALDLLVRNVTQQQAVILSENQLLLTAMAKLTSISVLTAGEQAPLSVAKLVGQVEVLVPMAGFINKDTELARLSKEIDKLHNEVMRIESKLSNEAFVAKAPEAVISKERAKMAEYQSGIEKLQAQFKAIEAL</sequence>
<feature type="chain" id="PRO_0000224485" description="Valine--tRNA ligase">
    <location>
        <begin position="1"/>
        <end position="961"/>
    </location>
</feature>
<feature type="coiled-coil region" evidence="1">
    <location>
        <begin position="892"/>
        <end position="961"/>
    </location>
</feature>
<feature type="short sequence motif" description="'HIGH' region">
    <location>
        <begin position="48"/>
        <end position="58"/>
    </location>
</feature>
<feature type="short sequence motif" description="'KMSKS' region">
    <location>
        <begin position="560"/>
        <end position="564"/>
    </location>
</feature>
<feature type="binding site" evidence="1">
    <location>
        <position position="563"/>
    </location>
    <ligand>
        <name>ATP</name>
        <dbReference type="ChEBI" id="CHEBI:30616"/>
    </ligand>
</feature>
<evidence type="ECO:0000255" key="1">
    <source>
        <dbReference type="HAMAP-Rule" id="MF_02004"/>
    </source>
</evidence>
<keyword id="KW-0030">Aminoacyl-tRNA synthetase</keyword>
<keyword id="KW-0067">ATP-binding</keyword>
<keyword id="KW-0175">Coiled coil</keyword>
<keyword id="KW-0963">Cytoplasm</keyword>
<keyword id="KW-0436">Ligase</keyword>
<keyword id="KW-0547">Nucleotide-binding</keyword>
<keyword id="KW-0648">Protein biosynthesis</keyword>
<keyword id="KW-1185">Reference proteome</keyword>
<protein>
    <recommendedName>
        <fullName evidence="1">Valine--tRNA ligase</fullName>
        <ecNumber evidence="1">6.1.1.9</ecNumber>
    </recommendedName>
    <alternativeName>
        <fullName evidence="1">Valyl-tRNA synthetase</fullName>
        <shortName evidence="1">ValRS</shortName>
    </alternativeName>
</protein>
<accession>Q7VN93</accession>